<proteinExistence type="inferred from homology"/>
<gene>
    <name evidence="1" type="primary">queA</name>
    <name type="ordered locus">DehaBAV1_0722</name>
</gene>
<comment type="function">
    <text evidence="1">Transfers and isomerizes the ribose moiety from AdoMet to the 7-aminomethyl group of 7-deazaguanine (preQ1-tRNA) to give epoxyqueuosine (oQ-tRNA).</text>
</comment>
<comment type="catalytic activity">
    <reaction evidence="1">
        <text>7-aminomethyl-7-carbaguanosine(34) in tRNA + S-adenosyl-L-methionine = epoxyqueuosine(34) in tRNA + adenine + L-methionine + 2 H(+)</text>
        <dbReference type="Rhea" id="RHEA:32155"/>
        <dbReference type="Rhea" id="RHEA-COMP:10342"/>
        <dbReference type="Rhea" id="RHEA-COMP:18582"/>
        <dbReference type="ChEBI" id="CHEBI:15378"/>
        <dbReference type="ChEBI" id="CHEBI:16708"/>
        <dbReference type="ChEBI" id="CHEBI:57844"/>
        <dbReference type="ChEBI" id="CHEBI:59789"/>
        <dbReference type="ChEBI" id="CHEBI:82833"/>
        <dbReference type="ChEBI" id="CHEBI:194443"/>
        <dbReference type="EC" id="2.4.99.17"/>
    </reaction>
</comment>
<comment type="pathway">
    <text evidence="1">tRNA modification; tRNA-queuosine biosynthesis.</text>
</comment>
<comment type="subunit">
    <text evidence="1">Monomer.</text>
</comment>
<comment type="subcellular location">
    <subcellularLocation>
        <location evidence="1">Cytoplasm</location>
    </subcellularLocation>
</comment>
<comment type="similarity">
    <text evidence="1">Belongs to the QueA family.</text>
</comment>
<keyword id="KW-0963">Cytoplasm</keyword>
<keyword id="KW-0671">Queuosine biosynthesis</keyword>
<keyword id="KW-0949">S-adenosyl-L-methionine</keyword>
<keyword id="KW-0808">Transferase</keyword>
<feature type="chain" id="PRO_1000076001" description="S-adenosylmethionine:tRNA ribosyltransferase-isomerase">
    <location>
        <begin position="1"/>
        <end position="343"/>
    </location>
</feature>
<evidence type="ECO:0000255" key="1">
    <source>
        <dbReference type="HAMAP-Rule" id="MF_00113"/>
    </source>
</evidence>
<sequence length="343" mass="38585">MKTSDFDYNLPQEYIAQKPAEPRDSSRLLVLNRQSEELTNRIFGEITDYFKPGDVLVMNDSRVLPARIKGIKQDTSAKIEILLLKRDGEGCWEALLKPSKRTKPGTIIDIHQPNGGISTQAKVLADKDDSIKLLRFSDETHLMKLGEVPLPPYIHTPVADPERYQTVYALTNGSVAAPTAGLHFTPELLKRLTEMGVICTYVTLHIGLDTFRPVKEEDPKDHKIHREYGILSKETASAICCAKETGKRVFCVGTSATRLVEQASHLSQTSLITSYSGWADLFILPGYKFRVADCFITNFHLPRSTPLMLTSAFAGWPFLRKAYEKAISEHYRFYSFGDAMLIL</sequence>
<dbReference type="EC" id="2.4.99.17" evidence="1"/>
<dbReference type="EMBL" id="CP000688">
    <property type="protein sequence ID" value="ABQ17306.1"/>
    <property type="molecule type" value="Genomic_DNA"/>
</dbReference>
<dbReference type="SMR" id="A5FR63"/>
<dbReference type="KEGG" id="deb:DehaBAV1_0722"/>
<dbReference type="PATRIC" id="fig|216389.18.peg.771"/>
<dbReference type="HOGENOM" id="CLU_039110_1_0_0"/>
<dbReference type="UniPathway" id="UPA00392"/>
<dbReference type="GO" id="GO:0005737">
    <property type="term" value="C:cytoplasm"/>
    <property type="evidence" value="ECO:0007669"/>
    <property type="project" value="UniProtKB-SubCell"/>
</dbReference>
<dbReference type="GO" id="GO:0051075">
    <property type="term" value="F:S-adenosylmethionine:tRNA ribosyltransferase-isomerase activity"/>
    <property type="evidence" value="ECO:0007669"/>
    <property type="project" value="UniProtKB-EC"/>
</dbReference>
<dbReference type="GO" id="GO:0008616">
    <property type="term" value="P:queuosine biosynthetic process"/>
    <property type="evidence" value="ECO:0007669"/>
    <property type="project" value="UniProtKB-UniRule"/>
</dbReference>
<dbReference type="GO" id="GO:0002099">
    <property type="term" value="P:tRNA wobble guanine modification"/>
    <property type="evidence" value="ECO:0007669"/>
    <property type="project" value="TreeGrafter"/>
</dbReference>
<dbReference type="FunFam" id="2.40.10.240:FF:000002">
    <property type="entry name" value="S-adenosylmethionine:tRNA ribosyltransferase-isomerase"/>
    <property type="match status" value="1"/>
</dbReference>
<dbReference type="Gene3D" id="2.40.10.240">
    <property type="entry name" value="QueA-like"/>
    <property type="match status" value="1"/>
</dbReference>
<dbReference type="Gene3D" id="3.40.1780.10">
    <property type="entry name" value="QueA-like"/>
    <property type="match status" value="1"/>
</dbReference>
<dbReference type="HAMAP" id="MF_00113">
    <property type="entry name" value="QueA"/>
    <property type="match status" value="1"/>
</dbReference>
<dbReference type="InterPro" id="IPR003699">
    <property type="entry name" value="QueA"/>
</dbReference>
<dbReference type="InterPro" id="IPR042118">
    <property type="entry name" value="QueA_dom1"/>
</dbReference>
<dbReference type="InterPro" id="IPR042119">
    <property type="entry name" value="QueA_dom2"/>
</dbReference>
<dbReference type="InterPro" id="IPR036100">
    <property type="entry name" value="QueA_sf"/>
</dbReference>
<dbReference type="NCBIfam" id="NF001140">
    <property type="entry name" value="PRK00147.1"/>
    <property type="match status" value="1"/>
</dbReference>
<dbReference type="NCBIfam" id="TIGR00113">
    <property type="entry name" value="queA"/>
    <property type="match status" value="1"/>
</dbReference>
<dbReference type="PANTHER" id="PTHR30307">
    <property type="entry name" value="S-ADENOSYLMETHIONINE:TRNA RIBOSYLTRANSFERASE-ISOMERASE"/>
    <property type="match status" value="1"/>
</dbReference>
<dbReference type="PANTHER" id="PTHR30307:SF0">
    <property type="entry name" value="S-ADENOSYLMETHIONINE:TRNA RIBOSYLTRANSFERASE-ISOMERASE"/>
    <property type="match status" value="1"/>
</dbReference>
<dbReference type="Pfam" id="PF02547">
    <property type="entry name" value="Queuosine_synth"/>
    <property type="match status" value="1"/>
</dbReference>
<dbReference type="SUPFAM" id="SSF111337">
    <property type="entry name" value="QueA-like"/>
    <property type="match status" value="1"/>
</dbReference>
<reference key="1">
    <citation type="submission" date="2007-05" db="EMBL/GenBank/DDBJ databases">
        <title>Complete sequence of Dehalococcoides sp. BAV1.</title>
        <authorList>
            <consortium name="US DOE Joint Genome Institute"/>
            <person name="Copeland A."/>
            <person name="Lucas S."/>
            <person name="Lapidus A."/>
            <person name="Barry K."/>
            <person name="Detter J.C."/>
            <person name="Glavina del Rio T."/>
            <person name="Hammon N."/>
            <person name="Israni S."/>
            <person name="Pitluck S."/>
            <person name="Lowry S."/>
            <person name="Clum A."/>
            <person name="Schmutz J."/>
            <person name="Larimer F."/>
            <person name="Land M."/>
            <person name="Hauser L."/>
            <person name="Kyrpides N."/>
            <person name="Kim E."/>
            <person name="Ritalahti K.M."/>
            <person name="Loeffler F."/>
            <person name="Richardson P."/>
        </authorList>
    </citation>
    <scope>NUCLEOTIDE SEQUENCE [LARGE SCALE GENOMIC DNA]</scope>
    <source>
        <strain>ATCC BAA-2100 / JCM 16839 / KCTC 5957 / BAV1</strain>
    </source>
</reference>
<organism>
    <name type="scientific">Dehalococcoides mccartyi (strain ATCC BAA-2100 / JCM 16839 / KCTC 5957 / BAV1)</name>
    <dbReference type="NCBI Taxonomy" id="216389"/>
    <lineage>
        <taxon>Bacteria</taxon>
        <taxon>Bacillati</taxon>
        <taxon>Chloroflexota</taxon>
        <taxon>Dehalococcoidia</taxon>
        <taxon>Dehalococcoidales</taxon>
        <taxon>Dehalococcoidaceae</taxon>
        <taxon>Dehalococcoides</taxon>
    </lineage>
</organism>
<name>QUEA_DEHMB</name>
<protein>
    <recommendedName>
        <fullName evidence="1">S-adenosylmethionine:tRNA ribosyltransferase-isomerase</fullName>
        <ecNumber evidence="1">2.4.99.17</ecNumber>
    </recommendedName>
    <alternativeName>
        <fullName evidence="1">Queuosine biosynthesis protein QueA</fullName>
    </alternativeName>
</protein>
<accession>A5FR63</accession>